<accession>Q2M3M2</accession>
<accession>B3KY87</accession>
<accession>B7ZL45</accession>
<accession>B7ZL47</accession>
<accession>E9PAK4</accession>
<accession>E9PJ08</accession>
<accession>Q5TET3</accession>
<comment type="function">
    <text evidence="4 10">Electrogenic Na(+)-coupled sugar symporter that may play a primary role in D-mannose and possibly D-fructose and D-glucose transport at the plasma membrane. Transporter activity is driven by a transmembrane Na(+) electrochemical gradient set by the Na(+)/K(+) pump. Exclusively recognizes sugar substrates having a pyranose ring with an axial hydroxyl group on carbon 2.</text>
</comment>
<comment type="catalytic activity">
    <reaction evidence="4">
        <text>D-mannose(out) + n Na(+)(out) = D-mannose(in) + n Na(+)(in)</text>
        <dbReference type="Rhea" id="RHEA:75475"/>
        <dbReference type="ChEBI" id="CHEBI:4208"/>
        <dbReference type="ChEBI" id="CHEBI:29101"/>
    </reaction>
</comment>
<comment type="subcellular location">
    <subcellularLocation>
        <location evidence="9">Cell membrane</location>
        <topology evidence="1">Multi-pass membrane protein</topology>
    </subcellularLocation>
</comment>
<comment type="alternative products">
    <event type="alternative splicing"/>
    <isoform>
        <id>Q2M3M2-1</id>
        <name>1</name>
        <sequence type="displayed"/>
    </isoform>
    <isoform>
        <id>Q2M3M2-2</id>
        <name>2</name>
        <sequence type="described" ref="VSP_044577"/>
    </isoform>
    <isoform>
        <id>Q2M3M2-3</id>
        <name>3</name>
        <sequence type="described" ref="VSP_057168"/>
    </isoform>
</comment>
<comment type="tissue specificity">
    <text evidence="4">Expressed in the small intestine, kidney and liver.</text>
</comment>
<comment type="similarity">
    <text evidence="8">Belongs to the sodium:solute symporter (SSF) (TC 2.A.21) family.</text>
</comment>
<sequence length="681" mass="74073">MSKELAAMGPGASGDGVRTETAPHIALDSRVGLHAYDISVVVIYFVFVIAVGIWSSIRASRGTIGGYFLAGRSMSWWPIGASLMSSNVGSGLFIGLAGTGAAGGLAVGGFEWNATWLLLALGWVFVPVYIAAGVVTMPQYLKKRFGGQRIQVYMSVLSLILYIFTKISTDIFSGALFIQMALGWNLYLSTGILLVVTAVYTIAGGLMAVIYTDALQTVIMVGGALVLMFLGFQDVGWYPGLEQRYRQAIPNVTVPNTTCHLPRPDAFHILRDPVSGDIPWPGLIFGLTVLATWCWCTDQVIVQRSLSAKSLSHAKGGSVLGGYLKILPMFFIVMPGMISRALFPDEVGCVDPDVCQRICGARVGCSNIAYPKLVMALMPVGLRGLMIAVIMAALMSSLTSIFNSSSTLFTIDVWQRFRRKSTEQELMVVGRVFVVFLVVISILWIPIIQSSNSGQLFDYIQAVTSYLAPPITALFLLAIFCKRVTEPGAFWGLVFGLGVGLLRMILEFSYPAPACGEVDRRPAVLKDFHYLYFAILLCGLTAIVIVIVSLCTTPIPEEQLTRLTWWTRNCPLSELEKEAHESTPEISERPAGECPAGGGAAENSSLGQEQPEAPSRSWGKLLWSWFCGLSGTPEQALSPAEKAALEQKLTSIEEEPLWRHVCNINAVLLLAINIFLWGYFA</sequence>
<dbReference type="EMBL" id="AK131200">
    <property type="protein sequence ID" value="BAG54749.1"/>
    <property type="molecule type" value="mRNA"/>
</dbReference>
<dbReference type="EMBL" id="AL109659">
    <property type="status" value="NOT_ANNOTATED_CDS"/>
    <property type="molecule type" value="Genomic_DNA"/>
</dbReference>
<dbReference type="EMBL" id="CH471059">
    <property type="protein sequence ID" value="EAX06857.1"/>
    <property type="molecule type" value="Genomic_DNA"/>
</dbReference>
<dbReference type="EMBL" id="BC104857">
    <property type="protein sequence ID" value="AAI04858.1"/>
    <property type="molecule type" value="mRNA"/>
</dbReference>
<dbReference type="EMBL" id="BC104863">
    <property type="protein sequence ID" value="AAI04864.1"/>
    <property type="molecule type" value="mRNA"/>
</dbReference>
<dbReference type="EMBL" id="BC143570">
    <property type="protein sequence ID" value="AAI43571.1"/>
    <property type="molecule type" value="mRNA"/>
</dbReference>
<dbReference type="EMBL" id="BC143572">
    <property type="protein sequence ID" value="AAI43573.1"/>
    <property type="molecule type" value="mRNA"/>
</dbReference>
<dbReference type="CCDS" id="CCDS30709.2">
    <molecule id="Q2M3M2-1"/>
</dbReference>
<dbReference type="CCDS" id="CCDS44136.1">
    <molecule id="Q2M3M2-2"/>
</dbReference>
<dbReference type="RefSeq" id="NP_001011547.2">
    <molecule id="Q2M3M2-1"/>
    <property type="nucleotide sequence ID" value="NM_001011547.3"/>
</dbReference>
<dbReference type="RefSeq" id="NP_001128653.1">
    <molecule id="Q2M3M2-2"/>
    <property type="nucleotide sequence ID" value="NM_001135181.2"/>
</dbReference>
<dbReference type="SMR" id="Q2M3M2"/>
<dbReference type="BioGRID" id="128290">
    <property type="interactions" value="5"/>
</dbReference>
<dbReference type="FunCoup" id="Q2M3M2">
    <property type="interactions" value="112"/>
</dbReference>
<dbReference type="IntAct" id="Q2M3M2">
    <property type="interactions" value="5"/>
</dbReference>
<dbReference type="STRING" id="9606.ENSP00000236495"/>
<dbReference type="DrugCentral" id="Q2M3M2"/>
<dbReference type="TCDB" id="2.A.21.3.17">
    <property type="family name" value="the solute:sodium symporter (sss) family"/>
</dbReference>
<dbReference type="GlyCosmos" id="Q2M3M2">
    <property type="glycosylation" value="2 sites, 1 glycan"/>
</dbReference>
<dbReference type="GlyGen" id="Q2M3M2">
    <property type="glycosylation" value="3 sites, 2 O-linked glycans (2 sites)"/>
</dbReference>
<dbReference type="iPTMnet" id="Q2M3M2"/>
<dbReference type="PhosphoSitePlus" id="Q2M3M2"/>
<dbReference type="BioMuta" id="SLC5A9"/>
<dbReference type="DMDM" id="189046189"/>
<dbReference type="jPOST" id="Q2M3M2"/>
<dbReference type="MassIVE" id="Q2M3M2"/>
<dbReference type="PaxDb" id="9606-ENSP00000236495"/>
<dbReference type="PeptideAtlas" id="Q2M3M2"/>
<dbReference type="ProteomicsDB" id="19032"/>
<dbReference type="ProteomicsDB" id="20981"/>
<dbReference type="ProteomicsDB" id="61379">
    <molecule id="Q2M3M2-1"/>
</dbReference>
<dbReference type="Antibodypedia" id="32891">
    <property type="antibodies" value="159 antibodies from 23 providers"/>
</dbReference>
<dbReference type="DNASU" id="200010"/>
<dbReference type="Ensembl" id="ENST00000236495.9">
    <molecule id="Q2M3M2-2"/>
    <property type="protein sequence ID" value="ENSP00000236495.5"/>
    <property type="gene ID" value="ENSG00000117834.13"/>
</dbReference>
<dbReference type="Ensembl" id="ENST00000438567.7">
    <molecule id="Q2M3M2-1"/>
    <property type="protein sequence ID" value="ENSP00000401730.2"/>
    <property type="gene ID" value="ENSG00000117834.13"/>
</dbReference>
<dbReference type="Ensembl" id="ENST00000533824.5">
    <molecule id="Q2M3M2-3"/>
    <property type="protein sequence ID" value="ENSP00000431900.1"/>
    <property type="gene ID" value="ENSG00000117834.13"/>
</dbReference>
<dbReference type="GeneID" id="200010"/>
<dbReference type="KEGG" id="hsa:200010"/>
<dbReference type="MANE-Select" id="ENST00000438567.7">
    <property type="protein sequence ID" value="ENSP00000401730.2"/>
    <property type="RefSeq nucleotide sequence ID" value="NM_001011547.3"/>
    <property type="RefSeq protein sequence ID" value="NP_001011547.2"/>
</dbReference>
<dbReference type="UCSC" id="uc001crn.3">
    <molecule id="Q2M3M2-1"/>
    <property type="organism name" value="human"/>
</dbReference>
<dbReference type="AGR" id="HGNC:22146"/>
<dbReference type="CTD" id="200010"/>
<dbReference type="DisGeNET" id="200010"/>
<dbReference type="GeneCards" id="SLC5A9"/>
<dbReference type="HGNC" id="HGNC:22146">
    <property type="gene designation" value="SLC5A9"/>
</dbReference>
<dbReference type="HPA" id="ENSG00000117834">
    <property type="expression patterns" value="Tissue enriched (intestine)"/>
</dbReference>
<dbReference type="MalaCards" id="SLC5A9"/>
<dbReference type="MIM" id="620216">
    <property type="type" value="gene"/>
</dbReference>
<dbReference type="neXtProt" id="NX_Q2M3M2"/>
<dbReference type="OpenTargets" id="ENSG00000117834"/>
<dbReference type="PharmGKB" id="PA134949681"/>
<dbReference type="VEuPathDB" id="HostDB:ENSG00000117834"/>
<dbReference type="eggNOG" id="KOG2349">
    <property type="taxonomic scope" value="Eukaryota"/>
</dbReference>
<dbReference type="GeneTree" id="ENSGT00940000157546"/>
<dbReference type="HOGENOM" id="CLU_018808_9_2_1"/>
<dbReference type="InParanoid" id="Q2M3M2"/>
<dbReference type="OMA" id="WKRMTPT"/>
<dbReference type="OrthoDB" id="6132759at2759"/>
<dbReference type="PAN-GO" id="Q2M3M2">
    <property type="GO annotations" value="4 GO annotations based on evolutionary models"/>
</dbReference>
<dbReference type="PhylomeDB" id="Q2M3M2"/>
<dbReference type="TreeFam" id="TF352855"/>
<dbReference type="PathwayCommons" id="Q2M3M2"/>
<dbReference type="Reactome" id="R-HSA-189200">
    <property type="pathway name" value="Cellular hexose transport"/>
</dbReference>
<dbReference type="BioGRID-ORCS" id="200010">
    <property type="hits" value="14 hits in 1141 CRISPR screens"/>
</dbReference>
<dbReference type="GenomeRNAi" id="200010"/>
<dbReference type="Pharos" id="Q2M3M2">
    <property type="development level" value="Tbio"/>
</dbReference>
<dbReference type="PRO" id="PR:Q2M3M2"/>
<dbReference type="Proteomes" id="UP000005640">
    <property type="component" value="Chromosome 1"/>
</dbReference>
<dbReference type="RNAct" id="Q2M3M2">
    <property type="molecule type" value="protein"/>
</dbReference>
<dbReference type="Bgee" id="ENSG00000117834">
    <property type="expression patterns" value="Expressed in ileal mucosa and 112 other cell types or tissues"/>
</dbReference>
<dbReference type="ExpressionAtlas" id="Q2M3M2">
    <property type="expression patterns" value="baseline and differential"/>
</dbReference>
<dbReference type="GO" id="GO:0070062">
    <property type="term" value="C:extracellular exosome"/>
    <property type="evidence" value="ECO:0007005"/>
    <property type="project" value="UniProtKB"/>
</dbReference>
<dbReference type="GO" id="GO:0005886">
    <property type="term" value="C:plasma membrane"/>
    <property type="evidence" value="ECO:0000318"/>
    <property type="project" value="GO_Central"/>
</dbReference>
<dbReference type="GO" id="GO:0005412">
    <property type="term" value="F:D-glucose:sodium symporter activity"/>
    <property type="evidence" value="ECO:0000318"/>
    <property type="project" value="GO_Central"/>
</dbReference>
<dbReference type="GO" id="GO:0005362">
    <property type="term" value="F:low-affinity D-glucose:sodium symporter activity"/>
    <property type="evidence" value="ECO:0000304"/>
    <property type="project" value="Reactome"/>
</dbReference>
<dbReference type="GO" id="GO:0008645">
    <property type="term" value="P:hexose transmembrane transport"/>
    <property type="evidence" value="ECO:0000304"/>
    <property type="project" value="Reactome"/>
</dbReference>
<dbReference type="CDD" id="cd11488">
    <property type="entry name" value="SLC5sbd_SGLT4"/>
    <property type="match status" value="1"/>
</dbReference>
<dbReference type="FunFam" id="1.20.1730.10:FF:000004">
    <property type="entry name" value="sodium/glucose cotransporter 5 isoform X1"/>
    <property type="match status" value="1"/>
</dbReference>
<dbReference type="Gene3D" id="1.20.1730.10">
    <property type="entry name" value="Sodium/glucose cotransporter"/>
    <property type="match status" value="1"/>
</dbReference>
<dbReference type="InterPro" id="IPR038377">
    <property type="entry name" value="Na/Glc_symporter_sf"/>
</dbReference>
<dbReference type="InterPro" id="IPR001734">
    <property type="entry name" value="Na/solute_symporter"/>
</dbReference>
<dbReference type="InterPro" id="IPR018212">
    <property type="entry name" value="Na/solute_symporter_CS"/>
</dbReference>
<dbReference type="NCBIfam" id="TIGR00813">
    <property type="entry name" value="sss"/>
    <property type="match status" value="1"/>
</dbReference>
<dbReference type="PANTHER" id="PTHR11819:SF96">
    <property type="entry name" value="SODIUM_GLUCOSE COTRANSPORTER 4"/>
    <property type="match status" value="1"/>
</dbReference>
<dbReference type="PANTHER" id="PTHR11819">
    <property type="entry name" value="SOLUTE CARRIER FAMILY 5"/>
    <property type="match status" value="1"/>
</dbReference>
<dbReference type="Pfam" id="PF00474">
    <property type="entry name" value="SSF"/>
    <property type="match status" value="1"/>
</dbReference>
<dbReference type="PROSITE" id="PS00456">
    <property type="entry name" value="NA_SOLUT_SYMP_1"/>
    <property type="match status" value="1"/>
</dbReference>
<dbReference type="PROSITE" id="PS50283">
    <property type="entry name" value="NA_SOLUT_SYMP_3"/>
    <property type="match status" value="1"/>
</dbReference>
<protein>
    <recommendedName>
        <fullName>Sodium/glucose cotransporter 4</fullName>
        <shortName>Na(+)/glucose cotransporter 4</shortName>
        <shortName>hSGLT4</shortName>
    </recommendedName>
    <alternativeName>
        <fullName>Solute carrier family 5 member 9</fullName>
    </alternativeName>
</protein>
<organism>
    <name type="scientific">Homo sapiens</name>
    <name type="common">Human</name>
    <dbReference type="NCBI Taxonomy" id="9606"/>
    <lineage>
        <taxon>Eukaryota</taxon>
        <taxon>Metazoa</taxon>
        <taxon>Chordata</taxon>
        <taxon>Craniata</taxon>
        <taxon>Vertebrata</taxon>
        <taxon>Euteleostomi</taxon>
        <taxon>Mammalia</taxon>
        <taxon>Eutheria</taxon>
        <taxon>Euarchontoglires</taxon>
        <taxon>Primates</taxon>
        <taxon>Haplorrhini</taxon>
        <taxon>Catarrhini</taxon>
        <taxon>Hominidae</taxon>
        <taxon>Homo</taxon>
    </lineage>
</organism>
<keyword id="KW-0025">Alternative splicing</keyword>
<keyword id="KW-1003">Cell membrane</keyword>
<keyword id="KW-0325">Glycoprotein</keyword>
<keyword id="KW-0406">Ion transport</keyword>
<keyword id="KW-0472">Membrane</keyword>
<keyword id="KW-0597">Phosphoprotein</keyword>
<keyword id="KW-1267">Proteomics identification</keyword>
<keyword id="KW-1185">Reference proteome</keyword>
<keyword id="KW-0915">Sodium</keyword>
<keyword id="KW-0739">Sodium transport</keyword>
<keyword id="KW-0762">Sugar transport</keyword>
<keyword id="KW-0769">Symport</keyword>
<keyword id="KW-0812">Transmembrane</keyword>
<keyword id="KW-1133">Transmembrane helix</keyword>
<keyword id="KW-0813">Transport</keyword>
<gene>
    <name evidence="7" type="primary">SLC5A9</name>
    <name evidence="7" type="synonym">SGLT4</name>
</gene>
<feature type="chain" id="PRO_0000333805" description="Sodium/glucose cotransporter 4">
    <location>
        <begin position="1"/>
        <end position="681"/>
    </location>
</feature>
<feature type="topological domain" description="Extracellular" evidence="1">
    <location>
        <begin position="1"/>
        <end position="36"/>
    </location>
</feature>
<feature type="transmembrane region" description="Helical" evidence="1">
    <location>
        <begin position="37"/>
        <end position="57"/>
    </location>
</feature>
<feature type="topological domain" description="Cytoplasmic" evidence="1">
    <location>
        <begin position="58"/>
        <end position="75"/>
    </location>
</feature>
<feature type="transmembrane region" description="Helical" evidence="1">
    <location>
        <begin position="76"/>
        <end position="98"/>
    </location>
</feature>
<feature type="topological domain" description="Extracellular" evidence="1">
    <location>
        <begin position="99"/>
        <end position="114"/>
    </location>
</feature>
<feature type="transmembrane region" description="Helical" evidence="1">
    <location>
        <begin position="115"/>
        <end position="135"/>
    </location>
</feature>
<feature type="topological domain" description="Cytoplasmic" evidence="1">
    <location>
        <begin position="136"/>
        <end position="157"/>
    </location>
</feature>
<feature type="transmembrane region" description="Helical" evidence="1">
    <location>
        <begin position="158"/>
        <end position="178"/>
    </location>
</feature>
<feature type="topological domain" description="Extracellular" evidence="1">
    <location>
        <begin position="179"/>
        <end position="190"/>
    </location>
</feature>
<feature type="transmembrane region" description="Helical" evidence="1">
    <location>
        <begin position="191"/>
        <end position="211"/>
    </location>
</feature>
<feature type="topological domain" description="Cytoplasmic" evidence="1">
    <location>
        <begin position="212"/>
        <end position="217"/>
    </location>
</feature>
<feature type="transmembrane region" description="Helical" evidence="1">
    <location>
        <begin position="218"/>
        <end position="238"/>
    </location>
</feature>
<feature type="topological domain" description="Extracellular" evidence="1">
    <location>
        <begin position="239"/>
        <end position="275"/>
    </location>
</feature>
<feature type="transmembrane region" description="Helical" evidence="1">
    <location>
        <begin position="276"/>
        <end position="296"/>
    </location>
</feature>
<feature type="topological domain" description="Cytoplasmic" evidence="1">
    <location>
        <begin position="297"/>
        <end position="317"/>
    </location>
</feature>
<feature type="transmembrane region" description="Helical" evidence="1">
    <location>
        <begin position="318"/>
        <end position="338"/>
    </location>
</feature>
<feature type="topological domain" description="Extracellular" evidence="1">
    <location>
        <begin position="339"/>
        <end position="383"/>
    </location>
</feature>
<feature type="transmembrane region" description="Helical" evidence="1">
    <location>
        <begin position="384"/>
        <end position="406"/>
    </location>
</feature>
<feature type="topological domain" description="Cytoplasmic" evidence="1">
    <location>
        <begin position="407"/>
        <end position="427"/>
    </location>
</feature>
<feature type="transmembrane region" description="Helical" evidence="1">
    <location>
        <begin position="428"/>
        <end position="448"/>
    </location>
</feature>
<feature type="topological domain" description="Extracellular" evidence="1">
    <location>
        <begin position="449"/>
        <end position="459"/>
    </location>
</feature>
<feature type="transmembrane region" description="Helical" evidence="1">
    <location>
        <begin position="460"/>
        <end position="480"/>
    </location>
</feature>
<feature type="topological domain" description="Cytoplasmic" evidence="1">
    <location>
        <begin position="481"/>
        <end position="487"/>
    </location>
</feature>
<feature type="transmembrane region" description="Helical" evidence="1">
    <location>
        <begin position="488"/>
        <end position="508"/>
    </location>
</feature>
<feature type="topological domain" description="Extracellular" evidence="1">
    <location>
        <begin position="509"/>
        <end position="530"/>
    </location>
</feature>
<feature type="transmembrane region" description="Helical" evidence="1">
    <location>
        <begin position="531"/>
        <end position="551"/>
    </location>
</feature>
<feature type="topological domain" description="Cytoplasmic" evidence="1">
    <location>
        <begin position="552"/>
        <end position="660"/>
    </location>
</feature>
<feature type="transmembrane region" description="Helical" evidence="1">
    <location>
        <begin position="661"/>
        <end position="681"/>
    </location>
</feature>
<feature type="region of interest" description="Disordered" evidence="2">
    <location>
        <begin position="579"/>
        <end position="614"/>
    </location>
</feature>
<feature type="compositionally biased region" description="Basic and acidic residues" evidence="2">
    <location>
        <begin position="579"/>
        <end position="591"/>
    </location>
</feature>
<feature type="modified residue" description="Phosphoserine" evidence="11">
    <location>
        <position position="604"/>
    </location>
</feature>
<feature type="modified residue" description="Phosphoserine" evidence="11">
    <location>
        <position position="605"/>
    </location>
</feature>
<feature type="glycosylation site" description="N-linked (GlcNAc...) asparagine" evidence="1">
    <location>
        <position position="251"/>
    </location>
</feature>
<feature type="splice variant" id="VSP_044577" description="In isoform 2." evidence="6">
    <original>N</original>
    <variation>NMRKSRSGGDRGIHPRSHGRTGVRSQ</variation>
    <location>
        <position position="113"/>
    </location>
</feature>
<feature type="splice variant" id="VSP_057168" description="In isoform 3." evidence="6">
    <original>N</original>
    <variation>NMRKSRSGGDRGIHPRSHGRTG</variation>
    <location>
        <position position="113"/>
    </location>
</feature>
<feature type="sequence variant" id="VAR_068963" description="In dbSNP:rs141515954." evidence="3">
    <original>V</original>
    <variation>I</variation>
    <location>
        <position position="124"/>
    </location>
</feature>
<feature type="sequence variant" id="VAR_043166" description="In dbSNP:rs212989.">
    <original>V</original>
    <variation>M</variation>
    <location>
        <position position="152"/>
    </location>
</feature>
<feature type="sequence variant" id="VAR_043167" description="In dbSNP:rs12047252.">
    <original>M</original>
    <variation>T</variation>
    <location>
        <position position="207"/>
    </location>
</feature>
<feature type="sequence variant" id="VAR_043168" description="In dbSNP:rs212991." evidence="3 4 5">
    <original>I</original>
    <variation>M</variation>
    <location>
        <position position="269"/>
    </location>
</feature>
<reference key="1">
    <citation type="journal article" date="2005" name="Life Sci.">
        <title>SLC5A9/SGLT4, a new Na+-dependent glucose transporter, is an essential transporter for mannose, 1,5-anhydro-D-glucitol, and fructose.</title>
        <authorList>
            <person name="Tazawa S."/>
            <person name="Yamato T."/>
            <person name="Fujikura H."/>
            <person name="Hiratochi M."/>
            <person name="Itoh F."/>
            <person name="Tomae M."/>
            <person name="Takemura Y."/>
            <person name="Maruyama H."/>
            <person name="Sugiyama T."/>
            <person name="Wakamatsu A."/>
            <person name="Isogai T."/>
            <person name="Isaji M."/>
        </authorList>
    </citation>
    <scope>NUCLEOTIDE SEQUENCE [LARGE SCALE MRNA] (ISOFORM 1)</scope>
    <scope>FUNCTION</scope>
    <scope>TRANSPORT ACTIVITY</scope>
    <scope>SUBCELLULAR LOCATION</scope>
    <scope>TISSUE SPECIFICITY</scope>
    <scope>VARIANT MET-269</scope>
    <source>
        <tissue>Intestine</tissue>
    </source>
</reference>
<reference key="2">
    <citation type="journal article" date="2006" name="Nature">
        <title>The DNA sequence and biological annotation of human chromosome 1.</title>
        <authorList>
            <person name="Gregory S.G."/>
            <person name="Barlow K.F."/>
            <person name="McLay K.E."/>
            <person name="Kaul R."/>
            <person name="Swarbreck D."/>
            <person name="Dunham A."/>
            <person name="Scott C.E."/>
            <person name="Howe K.L."/>
            <person name="Woodfine K."/>
            <person name="Spencer C.C.A."/>
            <person name="Jones M.C."/>
            <person name="Gillson C."/>
            <person name="Searle S."/>
            <person name="Zhou Y."/>
            <person name="Kokocinski F."/>
            <person name="McDonald L."/>
            <person name="Evans R."/>
            <person name="Phillips K."/>
            <person name="Atkinson A."/>
            <person name="Cooper R."/>
            <person name="Jones C."/>
            <person name="Hall R.E."/>
            <person name="Andrews T.D."/>
            <person name="Lloyd C."/>
            <person name="Ainscough R."/>
            <person name="Almeida J.P."/>
            <person name="Ambrose K.D."/>
            <person name="Anderson F."/>
            <person name="Andrew R.W."/>
            <person name="Ashwell R.I.S."/>
            <person name="Aubin K."/>
            <person name="Babbage A.K."/>
            <person name="Bagguley C.L."/>
            <person name="Bailey J."/>
            <person name="Beasley H."/>
            <person name="Bethel G."/>
            <person name="Bird C.P."/>
            <person name="Bray-Allen S."/>
            <person name="Brown J.Y."/>
            <person name="Brown A.J."/>
            <person name="Buckley D."/>
            <person name="Burton J."/>
            <person name="Bye J."/>
            <person name="Carder C."/>
            <person name="Chapman J.C."/>
            <person name="Clark S.Y."/>
            <person name="Clarke G."/>
            <person name="Clee C."/>
            <person name="Cobley V."/>
            <person name="Collier R.E."/>
            <person name="Corby N."/>
            <person name="Coville G.J."/>
            <person name="Davies J."/>
            <person name="Deadman R."/>
            <person name="Dunn M."/>
            <person name="Earthrowl M."/>
            <person name="Ellington A.G."/>
            <person name="Errington H."/>
            <person name="Frankish A."/>
            <person name="Frankland J."/>
            <person name="French L."/>
            <person name="Garner P."/>
            <person name="Garnett J."/>
            <person name="Gay L."/>
            <person name="Ghori M.R.J."/>
            <person name="Gibson R."/>
            <person name="Gilby L.M."/>
            <person name="Gillett W."/>
            <person name="Glithero R.J."/>
            <person name="Grafham D.V."/>
            <person name="Griffiths C."/>
            <person name="Griffiths-Jones S."/>
            <person name="Grocock R."/>
            <person name="Hammond S."/>
            <person name="Harrison E.S.I."/>
            <person name="Hart E."/>
            <person name="Haugen E."/>
            <person name="Heath P.D."/>
            <person name="Holmes S."/>
            <person name="Holt K."/>
            <person name="Howden P.J."/>
            <person name="Hunt A.R."/>
            <person name="Hunt S.E."/>
            <person name="Hunter G."/>
            <person name="Isherwood J."/>
            <person name="James R."/>
            <person name="Johnson C."/>
            <person name="Johnson D."/>
            <person name="Joy A."/>
            <person name="Kay M."/>
            <person name="Kershaw J.K."/>
            <person name="Kibukawa M."/>
            <person name="Kimberley A.M."/>
            <person name="King A."/>
            <person name="Knights A.J."/>
            <person name="Lad H."/>
            <person name="Laird G."/>
            <person name="Lawlor S."/>
            <person name="Leongamornlert D.A."/>
            <person name="Lloyd D.M."/>
            <person name="Loveland J."/>
            <person name="Lovell J."/>
            <person name="Lush M.J."/>
            <person name="Lyne R."/>
            <person name="Martin S."/>
            <person name="Mashreghi-Mohammadi M."/>
            <person name="Matthews L."/>
            <person name="Matthews N.S.W."/>
            <person name="McLaren S."/>
            <person name="Milne S."/>
            <person name="Mistry S."/>
            <person name="Moore M.J.F."/>
            <person name="Nickerson T."/>
            <person name="O'Dell C.N."/>
            <person name="Oliver K."/>
            <person name="Palmeiri A."/>
            <person name="Palmer S.A."/>
            <person name="Parker A."/>
            <person name="Patel D."/>
            <person name="Pearce A.V."/>
            <person name="Peck A.I."/>
            <person name="Pelan S."/>
            <person name="Phelps K."/>
            <person name="Phillimore B.J."/>
            <person name="Plumb R."/>
            <person name="Rajan J."/>
            <person name="Raymond C."/>
            <person name="Rouse G."/>
            <person name="Saenphimmachak C."/>
            <person name="Sehra H.K."/>
            <person name="Sheridan E."/>
            <person name="Shownkeen R."/>
            <person name="Sims S."/>
            <person name="Skuce C.D."/>
            <person name="Smith M."/>
            <person name="Steward C."/>
            <person name="Subramanian S."/>
            <person name="Sycamore N."/>
            <person name="Tracey A."/>
            <person name="Tromans A."/>
            <person name="Van Helmond Z."/>
            <person name="Wall M."/>
            <person name="Wallis J.M."/>
            <person name="White S."/>
            <person name="Whitehead S.L."/>
            <person name="Wilkinson J.E."/>
            <person name="Willey D.L."/>
            <person name="Williams H."/>
            <person name="Wilming L."/>
            <person name="Wray P.W."/>
            <person name="Wu Z."/>
            <person name="Coulson A."/>
            <person name="Vaudin M."/>
            <person name="Sulston J.E."/>
            <person name="Durbin R.M."/>
            <person name="Hubbard T."/>
            <person name="Wooster R."/>
            <person name="Dunham I."/>
            <person name="Carter N.P."/>
            <person name="McVean G."/>
            <person name="Ross M.T."/>
            <person name="Harrow J."/>
            <person name="Olson M.V."/>
            <person name="Beck S."/>
            <person name="Rogers J."/>
            <person name="Bentley D.R."/>
        </authorList>
    </citation>
    <scope>NUCLEOTIDE SEQUENCE [LARGE SCALE GENOMIC DNA]</scope>
</reference>
<reference key="3">
    <citation type="submission" date="2005-09" db="EMBL/GenBank/DDBJ databases">
        <authorList>
            <person name="Mural R.J."/>
            <person name="Istrail S."/>
            <person name="Sutton G.G."/>
            <person name="Florea L."/>
            <person name="Halpern A.L."/>
            <person name="Mobarry C.M."/>
            <person name="Lippert R."/>
            <person name="Walenz B."/>
            <person name="Shatkay H."/>
            <person name="Dew I."/>
            <person name="Miller J.R."/>
            <person name="Flanigan M.J."/>
            <person name="Edwards N.J."/>
            <person name="Bolanos R."/>
            <person name="Fasulo D."/>
            <person name="Halldorsson B.V."/>
            <person name="Hannenhalli S."/>
            <person name="Turner R."/>
            <person name="Yooseph S."/>
            <person name="Lu F."/>
            <person name="Nusskern D.R."/>
            <person name="Shue B.C."/>
            <person name="Zheng X.H."/>
            <person name="Zhong F."/>
            <person name="Delcher A.L."/>
            <person name="Huson D.H."/>
            <person name="Kravitz S.A."/>
            <person name="Mouchard L."/>
            <person name="Reinert K."/>
            <person name="Remington K.A."/>
            <person name="Clark A.G."/>
            <person name="Waterman M.S."/>
            <person name="Eichler E.E."/>
            <person name="Adams M.D."/>
            <person name="Hunkapiller M.W."/>
            <person name="Myers E.W."/>
            <person name="Venter J.C."/>
        </authorList>
    </citation>
    <scope>NUCLEOTIDE SEQUENCE [LARGE SCALE GENOMIC DNA]</scope>
    <scope>VARIANT MET-269</scope>
</reference>
<reference key="4">
    <citation type="journal article" date="2004" name="Genome Res.">
        <title>The status, quality, and expansion of the NIH full-length cDNA project: the Mammalian Gene Collection (MGC).</title>
        <authorList>
            <consortium name="The MGC Project Team"/>
        </authorList>
    </citation>
    <scope>NUCLEOTIDE SEQUENCE [LARGE SCALE MRNA] (ISOFORMS 1; 2 AND 3)</scope>
    <scope>VARIANTS ILE-124 AND MET-269</scope>
    <source>
        <tissue>Lung</tissue>
    </source>
</reference>
<reference key="5">
    <citation type="journal article" date="2014" name="J. Proteomics">
        <title>An enzyme assisted RP-RPLC approach for in-depth analysis of human liver phosphoproteome.</title>
        <authorList>
            <person name="Bian Y."/>
            <person name="Song C."/>
            <person name="Cheng K."/>
            <person name="Dong M."/>
            <person name="Wang F."/>
            <person name="Huang J."/>
            <person name="Sun D."/>
            <person name="Wang L."/>
            <person name="Ye M."/>
            <person name="Zou H."/>
        </authorList>
    </citation>
    <scope>PHOSPHORYLATION [LARGE SCALE ANALYSIS] AT SER-604 AND SER-605</scope>
    <scope>IDENTIFICATION BY MASS SPECTROMETRY [LARGE SCALE ANALYSIS]</scope>
    <source>
        <tissue>Liver</tissue>
    </source>
</reference>
<reference key="6">
    <citation type="journal article" date="2022" name="J. Mol. Biol.">
        <title>Structural basis of the selective sugar transport in sodium-glucose cotransporters.</title>
        <authorList>
            <person name="Kamitori K."/>
            <person name="Shirota M."/>
            <person name="Fujiwara Y."/>
        </authorList>
    </citation>
    <scope>FUNCTION</scope>
</reference>
<proteinExistence type="evidence at protein level"/>
<name>SC5A9_HUMAN</name>
<evidence type="ECO:0000255" key="1"/>
<evidence type="ECO:0000256" key="2">
    <source>
        <dbReference type="SAM" id="MobiDB-lite"/>
    </source>
</evidence>
<evidence type="ECO:0000269" key="3">
    <source>
    </source>
</evidence>
<evidence type="ECO:0000269" key="4">
    <source>
    </source>
</evidence>
<evidence type="ECO:0000269" key="5">
    <source ref="3"/>
</evidence>
<evidence type="ECO:0000303" key="6">
    <source>
    </source>
</evidence>
<evidence type="ECO:0000303" key="7">
    <source>
    </source>
</evidence>
<evidence type="ECO:0000305" key="8"/>
<evidence type="ECO:0000305" key="9">
    <source>
    </source>
</evidence>
<evidence type="ECO:0000305" key="10">
    <source>
    </source>
</evidence>
<evidence type="ECO:0007744" key="11">
    <source>
    </source>
</evidence>